<evidence type="ECO:0000255" key="1">
    <source>
        <dbReference type="HAMAP-Rule" id="MF_00340"/>
    </source>
</evidence>
<evidence type="ECO:0000305" key="2"/>
<keyword id="KW-1185">Reference proteome</keyword>
<keyword id="KW-0687">Ribonucleoprotein</keyword>
<keyword id="KW-0689">Ribosomal protein</keyword>
<protein>
    <recommendedName>
        <fullName evidence="1">Large ribosomal subunit protein bL32</fullName>
    </recommendedName>
    <alternativeName>
        <fullName evidence="2">50S ribosomal protein L32</fullName>
    </alternativeName>
</protein>
<feature type="chain" id="PRO_1000005066" description="Large ribosomal subunit protein bL32">
    <location>
        <begin position="1"/>
        <end position="49"/>
    </location>
</feature>
<name>RL32_NITSB</name>
<accession>A6Q202</accession>
<comment type="similarity">
    <text evidence="1">Belongs to the bacterial ribosomal protein bL32 family.</text>
</comment>
<sequence>MAVPKRRVSKTRAAKRRTHYKIKLVKPVKDKDGTWKLPHHVNPTTGEYK</sequence>
<proteinExistence type="inferred from homology"/>
<organism>
    <name type="scientific">Nitratiruptor sp. (strain SB155-2)</name>
    <dbReference type="NCBI Taxonomy" id="387092"/>
    <lineage>
        <taxon>Bacteria</taxon>
        <taxon>Pseudomonadati</taxon>
        <taxon>Campylobacterota</taxon>
        <taxon>Epsilonproteobacteria</taxon>
        <taxon>Nautiliales</taxon>
        <taxon>Nitratiruptoraceae</taxon>
        <taxon>Nitratiruptor</taxon>
    </lineage>
</organism>
<reference key="1">
    <citation type="journal article" date="2007" name="Proc. Natl. Acad. Sci. U.S.A.">
        <title>Deep-sea vent epsilon-proteobacterial genomes provide insights into emergence of pathogens.</title>
        <authorList>
            <person name="Nakagawa S."/>
            <person name="Takaki Y."/>
            <person name="Shimamura S."/>
            <person name="Reysenbach A.-L."/>
            <person name="Takai K."/>
            <person name="Horikoshi K."/>
        </authorList>
    </citation>
    <scope>NUCLEOTIDE SEQUENCE [LARGE SCALE GENOMIC DNA]</scope>
    <source>
        <strain>SB155-2</strain>
    </source>
</reference>
<gene>
    <name evidence="1" type="primary">rpmF</name>
    <name type="ordered locus">NIS_0397</name>
</gene>
<dbReference type="EMBL" id="AP009178">
    <property type="protein sequence ID" value="BAF69511.1"/>
    <property type="molecule type" value="Genomic_DNA"/>
</dbReference>
<dbReference type="RefSeq" id="WP_012081774.1">
    <property type="nucleotide sequence ID" value="NC_009662.1"/>
</dbReference>
<dbReference type="SMR" id="A6Q202"/>
<dbReference type="STRING" id="387092.NIS_0397"/>
<dbReference type="KEGG" id="nis:NIS_0397"/>
<dbReference type="eggNOG" id="COG0333">
    <property type="taxonomic scope" value="Bacteria"/>
</dbReference>
<dbReference type="HOGENOM" id="CLU_129084_1_2_7"/>
<dbReference type="InParanoid" id="A6Q202"/>
<dbReference type="OrthoDB" id="9801927at2"/>
<dbReference type="Proteomes" id="UP000001118">
    <property type="component" value="Chromosome"/>
</dbReference>
<dbReference type="GO" id="GO:0015934">
    <property type="term" value="C:large ribosomal subunit"/>
    <property type="evidence" value="ECO:0007669"/>
    <property type="project" value="InterPro"/>
</dbReference>
<dbReference type="GO" id="GO:0003735">
    <property type="term" value="F:structural constituent of ribosome"/>
    <property type="evidence" value="ECO:0007669"/>
    <property type="project" value="InterPro"/>
</dbReference>
<dbReference type="GO" id="GO:0006412">
    <property type="term" value="P:translation"/>
    <property type="evidence" value="ECO:0007669"/>
    <property type="project" value="UniProtKB-UniRule"/>
</dbReference>
<dbReference type="HAMAP" id="MF_00340">
    <property type="entry name" value="Ribosomal_bL32"/>
    <property type="match status" value="1"/>
</dbReference>
<dbReference type="InterPro" id="IPR002677">
    <property type="entry name" value="Ribosomal_bL32"/>
</dbReference>
<dbReference type="InterPro" id="IPR044957">
    <property type="entry name" value="Ribosomal_bL32_bact"/>
</dbReference>
<dbReference type="InterPro" id="IPR011332">
    <property type="entry name" value="Ribosomal_zn-bd"/>
</dbReference>
<dbReference type="NCBIfam" id="TIGR01031">
    <property type="entry name" value="rpmF_bact"/>
    <property type="match status" value="1"/>
</dbReference>
<dbReference type="PANTHER" id="PTHR35534">
    <property type="entry name" value="50S RIBOSOMAL PROTEIN L32"/>
    <property type="match status" value="1"/>
</dbReference>
<dbReference type="PANTHER" id="PTHR35534:SF1">
    <property type="entry name" value="LARGE RIBOSOMAL SUBUNIT PROTEIN BL32"/>
    <property type="match status" value="1"/>
</dbReference>
<dbReference type="Pfam" id="PF01783">
    <property type="entry name" value="Ribosomal_L32p"/>
    <property type="match status" value="1"/>
</dbReference>
<dbReference type="SUPFAM" id="SSF57829">
    <property type="entry name" value="Zn-binding ribosomal proteins"/>
    <property type="match status" value="1"/>
</dbReference>